<protein>
    <recommendedName>
        <fullName evidence="8">Cullin-4A</fullName>
        <shortName evidence="7">CUL-4A</shortName>
    </recommendedName>
</protein>
<gene>
    <name evidence="7 9" type="primary">Cul4a</name>
</gene>
<name>CUL4A_MOUSE</name>
<organism>
    <name type="scientific">Mus musculus</name>
    <name type="common">Mouse</name>
    <dbReference type="NCBI Taxonomy" id="10090"/>
    <lineage>
        <taxon>Eukaryota</taxon>
        <taxon>Metazoa</taxon>
        <taxon>Chordata</taxon>
        <taxon>Craniata</taxon>
        <taxon>Vertebrata</taxon>
        <taxon>Euteleostomi</taxon>
        <taxon>Mammalia</taxon>
        <taxon>Eutheria</taxon>
        <taxon>Euarchontoglires</taxon>
        <taxon>Glires</taxon>
        <taxon>Rodentia</taxon>
        <taxon>Myomorpha</taxon>
        <taxon>Muroidea</taxon>
        <taxon>Muridae</taxon>
        <taxon>Murinae</taxon>
        <taxon>Mus</taxon>
        <taxon>Mus</taxon>
    </lineage>
</organism>
<reference key="1">
    <citation type="journal article" date="2005" name="Science">
        <title>The transcriptional landscape of the mammalian genome.</title>
        <authorList>
            <person name="Carninci P."/>
            <person name="Kasukawa T."/>
            <person name="Katayama S."/>
            <person name="Gough J."/>
            <person name="Frith M.C."/>
            <person name="Maeda N."/>
            <person name="Oyama R."/>
            <person name="Ravasi T."/>
            <person name="Lenhard B."/>
            <person name="Wells C."/>
            <person name="Kodzius R."/>
            <person name="Shimokawa K."/>
            <person name="Bajic V.B."/>
            <person name="Brenner S.E."/>
            <person name="Batalov S."/>
            <person name="Forrest A.R."/>
            <person name="Zavolan M."/>
            <person name="Davis M.J."/>
            <person name="Wilming L.G."/>
            <person name="Aidinis V."/>
            <person name="Allen J.E."/>
            <person name="Ambesi-Impiombato A."/>
            <person name="Apweiler R."/>
            <person name="Aturaliya R.N."/>
            <person name="Bailey T.L."/>
            <person name="Bansal M."/>
            <person name="Baxter L."/>
            <person name="Beisel K.W."/>
            <person name="Bersano T."/>
            <person name="Bono H."/>
            <person name="Chalk A.M."/>
            <person name="Chiu K.P."/>
            <person name="Choudhary V."/>
            <person name="Christoffels A."/>
            <person name="Clutterbuck D.R."/>
            <person name="Crowe M.L."/>
            <person name="Dalla E."/>
            <person name="Dalrymple B.P."/>
            <person name="de Bono B."/>
            <person name="Della Gatta G."/>
            <person name="di Bernardo D."/>
            <person name="Down T."/>
            <person name="Engstrom P."/>
            <person name="Fagiolini M."/>
            <person name="Faulkner G."/>
            <person name="Fletcher C.F."/>
            <person name="Fukushima T."/>
            <person name="Furuno M."/>
            <person name="Futaki S."/>
            <person name="Gariboldi M."/>
            <person name="Georgii-Hemming P."/>
            <person name="Gingeras T.R."/>
            <person name="Gojobori T."/>
            <person name="Green R.E."/>
            <person name="Gustincich S."/>
            <person name="Harbers M."/>
            <person name="Hayashi Y."/>
            <person name="Hensch T.K."/>
            <person name="Hirokawa N."/>
            <person name="Hill D."/>
            <person name="Huminiecki L."/>
            <person name="Iacono M."/>
            <person name="Ikeo K."/>
            <person name="Iwama A."/>
            <person name="Ishikawa T."/>
            <person name="Jakt M."/>
            <person name="Kanapin A."/>
            <person name="Katoh M."/>
            <person name="Kawasawa Y."/>
            <person name="Kelso J."/>
            <person name="Kitamura H."/>
            <person name="Kitano H."/>
            <person name="Kollias G."/>
            <person name="Krishnan S.P."/>
            <person name="Kruger A."/>
            <person name="Kummerfeld S.K."/>
            <person name="Kurochkin I.V."/>
            <person name="Lareau L.F."/>
            <person name="Lazarevic D."/>
            <person name="Lipovich L."/>
            <person name="Liu J."/>
            <person name="Liuni S."/>
            <person name="McWilliam S."/>
            <person name="Madan Babu M."/>
            <person name="Madera M."/>
            <person name="Marchionni L."/>
            <person name="Matsuda H."/>
            <person name="Matsuzawa S."/>
            <person name="Miki H."/>
            <person name="Mignone F."/>
            <person name="Miyake S."/>
            <person name="Morris K."/>
            <person name="Mottagui-Tabar S."/>
            <person name="Mulder N."/>
            <person name="Nakano N."/>
            <person name="Nakauchi H."/>
            <person name="Ng P."/>
            <person name="Nilsson R."/>
            <person name="Nishiguchi S."/>
            <person name="Nishikawa S."/>
            <person name="Nori F."/>
            <person name="Ohara O."/>
            <person name="Okazaki Y."/>
            <person name="Orlando V."/>
            <person name="Pang K.C."/>
            <person name="Pavan W.J."/>
            <person name="Pavesi G."/>
            <person name="Pesole G."/>
            <person name="Petrovsky N."/>
            <person name="Piazza S."/>
            <person name="Reed J."/>
            <person name="Reid J.F."/>
            <person name="Ring B.Z."/>
            <person name="Ringwald M."/>
            <person name="Rost B."/>
            <person name="Ruan Y."/>
            <person name="Salzberg S.L."/>
            <person name="Sandelin A."/>
            <person name="Schneider C."/>
            <person name="Schoenbach C."/>
            <person name="Sekiguchi K."/>
            <person name="Semple C.A."/>
            <person name="Seno S."/>
            <person name="Sessa L."/>
            <person name="Sheng Y."/>
            <person name="Shibata Y."/>
            <person name="Shimada H."/>
            <person name="Shimada K."/>
            <person name="Silva D."/>
            <person name="Sinclair B."/>
            <person name="Sperling S."/>
            <person name="Stupka E."/>
            <person name="Sugiura K."/>
            <person name="Sultana R."/>
            <person name="Takenaka Y."/>
            <person name="Taki K."/>
            <person name="Tammoja K."/>
            <person name="Tan S.L."/>
            <person name="Tang S."/>
            <person name="Taylor M.S."/>
            <person name="Tegner J."/>
            <person name="Teichmann S.A."/>
            <person name="Ueda H.R."/>
            <person name="van Nimwegen E."/>
            <person name="Verardo R."/>
            <person name="Wei C.L."/>
            <person name="Yagi K."/>
            <person name="Yamanishi H."/>
            <person name="Zabarovsky E."/>
            <person name="Zhu S."/>
            <person name="Zimmer A."/>
            <person name="Hide W."/>
            <person name="Bult C."/>
            <person name="Grimmond S.M."/>
            <person name="Teasdale R.D."/>
            <person name="Liu E.T."/>
            <person name="Brusic V."/>
            <person name="Quackenbush J."/>
            <person name="Wahlestedt C."/>
            <person name="Mattick J.S."/>
            <person name="Hume D.A."/>
            <person name="Kai C."/>
            <person name="Sasaki D."/>
            <person name="Tomaru Y."/>
            <person name="Fukuda S."/>
            <person name="Kanamori-Katayama M."/>
            <person name="Suzuki M."/>
            <person name="Aoki J."/>
            <person name="Arakawa T."/>
            <person name="Iida J."/>
            <person name="Imamura K."/>
            <person name="Itoh M."/>
            <person name="Kato T."/>
            <person name="Kawaji H."/>
            <person name="Kawagashira N."/>
            <person name="Kawashima T."/>
            <person name="Kojima M."/>
            <person name="Kondo S."/>
            <person name="Konno H."/>
            <person name="Nakano K."/>
            <person name="Ninomiya N."/>
            <person name="Nishio T."/>
            <person name="Okada M."/>
            <person name="Plessy C."/>
            <person name="Shibata K."/>
            <person name="Shiraki T."/>
            <person name="Suzuki S."/>
            <person name="Tagami M."/>
            <person name="Waki K."/>
            <person name="Watahiki A."/>
            <person name="Okamura-Oho Y."/>
            <person name="Suzuki H."/>
            <person name="Kawai J."/>
            <person name="Hayashizaki Y."/>
        </authorList>
    </citation>
    <scope>NUCLEOTIDE SEQUENCE [LARGE SCALE MRNA]</scope>
    <source>
        <strain>BALB/cJ</strain>
        <strain>NOD</strain>
    </source>
</reference>
<reference key="2">
    <citation type="journal article" date="2004" name="Genome Res.">
        <title>The status, quality, and expansion of the NIH full-length cDNA project: the Mammalian Gene Collection (MGC).</title>
        <authorList>
            <consortium name="The MGC Project Team"/>
        </authorList>
    </citation>
    <scope>NUCLEOTIDE SEQUENCE [LARGE SCALE MRNA]</scope>
    <source>
        <strain>FVB/N</strain>
        <tissue>Mammary tumor</tissue>
    </source>
</reference>
<reference key="3">
    <citation type="journal article" date="2010" name="Cell">
        <title>A tissue-specific atlas of mouse protein phosphorylation and expression.</title>
        <authorList>
            <person name="Huttlin E.L."/>
            <person name="Jedrychowski M.P."/>
            <person name="Elias J.E."/>
            <person name="Goswami T."/>
            <person name="Rad R."/>
            <person name="Beausoleil S.A."/>
            <person name="Villen J."/>
            <person name="Haas W."/>
            <person name="Sowa M.E."/>
            <person name="Gygi S.P."/>
        </authorList>
    </citation>
    <scope>PHOSPHORYLATION [LARGE SCALE ANALYSIS] AT SER-10</scope>
    <scope>IDENTIFICATION BY MASS SPECTROMETRY [LARGE SCALE ANALYSIS]</scope>
    <source>
        <tissue>Brain</tissue>
        <tissue>Brown adipose tissue</tissue>
        <tissue>Heart</tissue>
        <tissue>Kidney</tissue>
        <tissue>Liver</tissue>
        <tissue>Lung</tissue>
        <tissue>Pancreas</tissue>
        <tissue>Spleen</tissue>
        <tissue>Testis</tissue>
    </source>
</reference>
<reference key="4">
    <citation type="journal article" date="2010" name="Nat. Cell Biol.">
        <title>A deneddylase encoded by Epstein-Barr virus promotes viral DNA replication by regulating the activity of cullin-RING ligases.</title>
        <authorList>
            <person name="Gastaldello S."/>
            <person name="Hildebrand S."/>
            <person name="Faridani O."/>
            <person name="Callegari S."/>
            <person name="Palmkvist M."/>
            <person name="Di Guglielmo C."/>
            <person name="Masucci M.G."/>
        </authorList>
    </citation>
    <scope>INTERACTION WITH MURINE CYTOMEGALOVIRUS M48</scope>
    <scope>DENEDDYLATION BY MURINE CYTOMEGALOVIRUS M48 (MICROBIAL INFECTION)</scope>
    <scope>NEDDYLATION</scope>
</reference>
<reference key="5">
    <citation type="journal article" date="2013" name="Science">
        <title>CRL4 complex regulates mammalian oocyte survival and reprogramming by activation of TET proteins.</title>
        <authorList>
            <person name="Yu C."/>
            <person name="Zhang Y.L."/>
            <person name="Pan W.W."/>
            <person name="Li X.M."/>
            <person name="Wang Z.W."/>
            <person name="Ge Z.J."/>
            <person name="Zhou J.J."/>
            <person name="Cang Y."/>
            <person name="Tong C."/>
            <person name="Sun Q.Y."/>
            <person name="Fan H.Y."/>
        </authorList>
    </citation>
    <scope>TISSUE SPECIFICITY</scope>
    <scope>DEVELOPMENTAL STAGE</scope>
</reference>
<comment type="function">
    <text evidence="1">Core component of multiple cullin-RING-based E3 ubiquitin-protein ligase complexes which mediate the ubiquitination of target proteins. As a scaffold protein may contribute to catalysis through positioning of the substrate and the ubiquitin-conjugating enzyme. The E3 ubiquitin-protein ligase activity of the complex is dependent on the neddylation of the cullin subunit and is inhibited by the association of the deneddylated cullin subunit with TIP120A/CAND1. The functional specificity of the E3 ubiquitin-protein ligase complex depends on the variable substrate recognition component. DCX(DET1-COP1) directs ubiquitination of JUN. DCX(DDB2) directs ubiquitination of XPC. DCX(DDB2) ubiquitinates histones H3-H4 and is required for efficient histone deposition during replication-coupled (H3.1) and replication-independent (H3.3) nucleosome assembly, probably by facilitating the transfer of H3 from ASF1A/ASF1B to other chaperones involved in histone deposition. DCX(DTL) plays a role in PCNA-dependent polyubiquitination of CDT1 and MDM2-dependent ubiquitination of p53/TP53 in response to radiation-induced DNA damage and during DNA replication. DCX(DTL) directs autoubiquitination of DTL. In association with DDB1 and SKP2 probably is involved in ubiquitination of CDKN1B/p27kip. Is involved in ubiquitination of HOXA9. The DDB1-CUL4A-DTL E3 ligase complex regulates the circadian clock function by mediating the ubiquitination and degradation of CRY1. The DCX(ERCC8) complex (also named CSA complex) plays a role in transcription-coupled repair (TCR). A number of DCX complexes (containing either TRPC4AP or DCAF12 as substrate-recognition component) are part of the DesCEND (destruction via C-end degrons) pathway, which recognizes a C-degron located at the extreme C terminus of target proteins, leading to their ubiquitination and degradation. With CUL4B, contributes to ribosome biogenesis. The DCX(AMBRA1) complex is a master regulator of the transition from G1 to S cell phase by mediating ubiquitination of phosphorylated cyclin-D (CCND1, CCND2 and CCND3). The DCX(AMBRA1) complex also acts as a regulator of Cul5-RING (CRL5) E3 ubiquitin-protein ligase complexes by mediating ubiquitination and degradation of Elongin-C (ELOC) component of CRL5 complexes.</text>
</comment>
<comment type="pathway">
    <text evidence="1">Protein modification; protein ubiquitination.</text>
</comment>
<comment type="subunit">
    <text evidence="1">Can self-associate. Component of multiple DCX (DDB1-CUL4-X-box) E3 ubiquitin-protein ligase complexes that seem to consist of DDB1, CUL4A or CUL4B, RBX1 and a variable substrate recognition component which seems to belong to a protein family described as DCAF (Ddb1- and Cul4-associated factor) or CDW (CUL4-DDB1-associated WD40-repeat) proteins. Component of the CSA complex (DCX(ERCC8) complex) containing ERCC8, RBX1, DDB1 and CUL4A; the CSA complex interacts with RNA polymerase II; upon UV irradiation it interacts with the COP9 signalosome and preferentially with the hyperphosphorylated form of RNA polymerase II. Component of the DCX(DET1-COP1) complex with the substrate recognition component DET1 and COP1. Component of the DCX(DDB2) complex with the substrate recognition component DDB2. Component of the DCX(DTL) complex with the putative substrate recognition component DTL. Component of DCX complexes part of the DesCEND (destruction via C-end degrons) pathway, which contain either TRPC4AP or DCAF12 as substrate-recognition component. Component of the DCX(AMBRA1) complex with the substrate recognition component AMBRA1. Interacts with DDB1, RBX1, RNF7, CDT1, TIP120A/CAND1, SKP2, CDKN1B, MDM2, TP53 and HOXA9. Interacts with DDB2; the interactions with DDB2 and CAND1 are mutually exclusive. Interacts with DCAF1, DTL, DDA1, DCAF6, DCAF4, DCAF16, DCAF17, DET1, WDTC1, DCAF5, DCAF11, WDR24A, COP1, PAFAH1B1, ERCC8, GRWD1, FBXW5, RBBP7, GNB2, WSB1, WSB2, NUP43, PWP1, FBXW8, ATG16L1, KATNB1, RBBP4, RBBP5, LRWD1 and DCAF8. May interact with WDR26, WDR51B, SNRNP40, WDR61, WDR76, WDR5. Interacts (when neddylated) with ARIH1; leading to activate the E3 ligase activity of ARIH1. The DDB1-CUL4A complex interacts with CRY1. Interacts (unneddylated form) with DCUN1D1, DCUN1D2, DCUN1D3, DCUN1D4 and DCUN1D5; these interactions promote the cullin neddylation.</text>
</comment>
<comment type="subunit">
    <text evidence="5">(Microbial infection) Interacts with murine cytomegalovirus M48.</text>
</comment>
<comment type="tissue specificity">
    <text evidence="6">Expressed in oocytes (at protein level) (PubMed:24357321). In the ovary, also expressed in cumulus cells. Expressed in testis, spleen and kidney (PubMed:24357321).</text>
</comment>
<comment type="developmental stage">
    <text evidence="6">Expressed at high levels in germinal vesicle (GV) stage oocytes and at lower levels in MII-stage oocytes and zygotes. Expression then decreases from 4-cell stage to blastula.</text>
</comment>
<comment type="PTM">
    <text evidence="1">Neddylated; required for activity of cullin-RING-based E3 ubiquitin-protein ligase complexes (By similarity). Deneddylated via its interaction with the COP9 signalosome (CSN) complex (By similarity).</text>
</comment>
<comment type="PTM">
    <text evidence="5">(Microbial infection) Deneddylated by murine cytomegalovirus M48 leading to a S-phase-like environment that is required for efficient replication of the viral genome.</text>
</comment>
<comment type="similarity">
    <text evidence="3">Belongs to the cullin family.</text>
</comment>
<sequence length="759" mass="87753">MADEGPRKGSVSALMGRTNGLTKPAALAGGPAKPGGTGGSRKLVIKNFRDRPRLPDNYTQDTWRKLHEAVKAIQSSTSIRYNLEELYQAVENLCSHKVSPTLYKQLRQVCEDHVQAQILPFREDSLDSVLFLKKINTCWQDHCRQMIMIRSIFLFLDRTYVLQNSMLPSIWDMGLELFRNHIISDRMVQSKTIDGILLLIGRERSGEAVDRSLLRSLLSMLSDLQVYKDSFELKFLEETNCLYAAEGQRLMQDREVPEYLNHVSKRLEEEADRVITYLDHSTQKPLIACVEKQLLGEHLTAILQKGLEHLLDENRVPDLTQMYQLFSRVKGGQHALLQHWSEYIKTFGTTIVINPEKDKDMVQDLLDFKDKVDHVVEVCFQRNERFINLMKESFETFINKRPNKPAELIAKHVDSKLRAGNKEATDEELERILDKIMILFRFIHGKDVFEAFYKKDLAKRLLVGKSASVDAEKSMLSKLKHECGAAFTSKLEGMFKDMELSKDIMVHFKQHMQNQSAPGPIDLTVNILTMGYWPTYTPMEVHLPPEMVRLQEVFKTFYLGKHSGRKLQWQTTLGHAVLKADFKEGKKEFQVSLFQTLVLLMFNEGDGFSFEEIKMATGIEDSELRRTLQSLACGKARVLIKSPKGKEVEDGDKFIFNADFKHKLFRIKINQIQMKETVEEQVSTTERVFQDRQYQIDAAIVRIMKMRKTLGHNLLVSELYNQLKFPVKPGDLKKRIESLIDRDYMERDKDSPNQYHYVA</sequence>
<evidence type="ECO:0000250" key="1">
    <source>
        <dbReference type="UniProtKB" id="Q13619"/>
    </source>
</evidence>
<evidence type="ECO:0000255" key="2"/>
<evidence type="ECO:0000255" key="3">
    <source>
        <dbReference type="PROSITE-ProRule" id="PRU00330"/>
    </source>
</evidence>
<evidence type="ECO:0000256" key="4">
    <source>
        <dbReference type="SAM" id="MobiDB-lite"/>
    </source>
</evidence>
<evidence type="ECO:0000269" key="5">
    <source>
    </source>
</evidence>
<evidence type="ECO:0000269" key="6">
    <source>
    </source>
</evidence>
<evidence type="ECO:0000303" key="7">
    <source>
    </source>
</evidence>
<evidence type="ECO:0000305" key="8"/>
<evidence type="ECO:0000312" key="9">
    <source>
        <dbReference type="MGI" id="MGI:1914487"/>
    </source>
</evidence>
<evidence type="ECO:0007744" key="10">
    <source>
    </source>
</evidence>
<proteinExistence type="evidence at protein level"/>
<accession>Q3TCH7</accession>
<accession>Q3THM3</accession>
<accession>Q91Z44</accession>
<dbReference type="EMBL" id="AK168215">
    <property type="protein sequence ID" value="BAE40173.1"/>
    <property type="molecule type" value="mRNA"/>
</dbReference>
<dbReference type="EMBL" id="AK170722">
    <property type="protein sequence ID" value="BAE41979.1"/>
    <property type="molecule type" value="mRNA"/>
</dbReference>
<dbReference type="EMBL" id="BC010211">
    <property type="protein sequence ID" value="AAH10211.2"/>
    <property type="molecule type" value="mRNA"/>
</dbReference>
<dbReference type="CCDS" id="CCDS52485.1"/>
<dbReference type="RefSeq" id="NP_666319.2">
    <property type="nucleotide sequence ID" value="NM_146207.3"/>
</dbReference>
<dbReference type="SMR" id="Q3TCH7"/>
<dbReference type="BioGRID" id="221235">
    <property type="interactions" value="113"/>
</dbReference>
<dbReference type="ComplexPortal" id="CPX-650">
    <property type="entry name" value="CRL4-DDB2 E3 ubiquitin ligase complex, CUL4A variant"/>
</dbReference>
<dbReference type="FunCoup" id="Q3TCH7">
    <property type="interactions" value="2412"/>
</dbReference>
<dbReference type="IntAct" id="Q3TCH7">
    <property type="interactions" value="38"/>
</dbReference>
<dbReference type="MINT" id="Q3TCH7"/>
<dbReference type="STRING" id="10090.ENSMUSP00000016680"/>
<dbReference type="ChEMBL" id="CHEMBL4523312"/>
<dbReference type="GlyGen" id="Q3TCH7">
    <property type="glycosylation" value="2 sites, 1 N-linked glycan (1 site), 1 O-linked glycan (1 site)"/>
</dbReference>
<dbReference type="iPTMnet" id="Q3TCH7"/>
<dbReference type="PhosphoSitePlus" id="Q3TCH7"/>
<dbReference type="SwissPalm" id="Q3TCH7"/>
<dbReference type="jPOST" id="Q3TCH7"/>
<dbReference type="PaxDb" id="10090-ENSMUSP00000016680"/>
<dbReference type="PeptideAtlas" id="Q3TCH7"/>
<dbReference type="ProteomicsDB" id="279211"/>
<dbReference type="Pumba" id="Q3TCH7"/>
<dbReference type="Antibodypedia" id="11756">
    <property type="antibodies" value="395 antibodies from 39 providers"/>
</dbReference>
<dbReference type="DNASU" id="99375"/>
<dbReference type="Ensembl" id="ENSMUST00000016680.14">
    <property type="protein sequence ID" value="ENSMUSP00000016680.8"/>
    <property type="gene ID" value="ENSMUSG00000031446.15"/>
</dbReference>
<dbReference type="GeneID" id="99375"/>
<dbReference type="KEGG" id="mmu:99375"/>
<dbReference type="UCSC" id="uc009kww.2">
    <property type="organism name" value="mouse"/>
</dbReference>
<dbReference type="AGR" id="MGI:1914487"/>
<dbReference type="CTD" id="8451"/>
<dbReference type="MGI" id="MGI:1914487">
    <property type="gene designation" value="Cul4a"/>
</dbReference>
<dbReference type="VEuPathDB" id="HostDB:ENSMUSG00000031446"/>
<dbReference type="eggNOG" id="KOG2167">
    <property type="taxonomic scope" value="Eukaryota"/>
</dbReference>
<dbReference type="GeneTree" id="ENSGT00940000156905"/>
<dbReference type="HOGENOM" id="CLU_004747_7_2_1"/>
<dbReference type="InParanoid" id="Q3TCH7"/>
<dbReference type="OMA" id="KCINLMK"/>
<dbReference type="OrthoDB" id="27073at2759"/>
<dbReference type="PhylomeDB" id="Q3TCH7"/>
<dbReference type="TreeFam" id="TF101153"/>
<dbReference type="Reactome" id="R-MMU-110314">
    <property type="pathway name" value="Recognition of DNA damage by PCNA-containing replication complex"/>
</dbReference>
<dbReference type="Reactome" id="R-MMU-5696394">
    <property type="pathway name" value="DNA Damage Recognition in GG-NER"/>
</dbReference>
<dbReference type="Reactome" id="R-MMU-5696395">
    <property type="pathway name" value="Formation of Incision Complex in GG-NER"/>
</dbReference>
<dbReference type="Reactome" id="R-MMU-5696400">
    <property type="pathway name" value="Dual Incision in GG-NER"/>
</dbReference>
<dbReference type="Reactome" id="R-MMU-6781823">
    <property type="pathway name" value="Formation of TC-NER Pre-Incision Complex"/>
</dbReference>
<dbReference type="Reactome" id="R-MMU-6782135">
    <property type="pathway name" value="Dual incision in TC-NER"/>
</dbReference>
<dbReference type="Reactome" id="R-MMU-6782210">
    <property type="pathway name" value="Gap-filling DNA repair synthesis and ligation in TC-NER"/>
</dbReference>
<dbReference type="Reactome" id="R-MMU-8951664">
    <property type="pathway name" value="Neddylation"/>
</dbReference>
<dbReference type="UniPathway" id="UPA00143"/>
<dbReference type="BioGRID-ORCS" id="99375">
    <property type="hits" value="3 hits in 115 CRISPR screens"/>
</dbReference>
<dbReference type="ChiTaRS" id="Cul4a">
    <property type="organism name" value="mouse"/>
</dbReference>
<dbReference type="PRO" id="PR:Q3TCH7"/>
<dbReference type="Proteomes" id="UP000000589">
    <property type="component" value="Chromosome 8"/>
</dbReference>
<dbReference type="RNAct" id="Q3TCH7">
    <property type="molecule type" value="protein"/>
</dbReference>
<dbReference type="Bgee" id="ENSMUSG00000031446">
    <property type="expression patterns" value="Expressed in ileal epithelium and 268 other cell types or tissues"/>
</dbReference>
<dbReference type="ExpressionAtlas" id="Q3TCH7">
    <property type="expression patterns" value="baseline and differential"/>
</dbReference>
<dbReference type="GO" id="GO:0080008">
    <property type="term" value="C:Cul4-RING E3 ubiquitin ligase complex"/>
    <property type="evidence" value="ECO:0000250"/>
    <property type="project" value="UniProtKB"/>
</dbReference>
<dbReference type="GO" id="GO:0031464">
    <property type="term" value="C:Cul4A-RING E3 ubiquitin ligase complex"/>
    <property type="evidence" value="ECO:0000269"/>
    <property type="project" value="ComplexPortal"/>
</dbReference>
<dbReference type="GO" id="GO:0005737">
    <property type="term" value="C:cytoplasm"/>
    <property type="evidence" value="ECO:0007669"/>
    <property type="project" value="Ensembl"/>
</dbReference>
<dbReference type="GO" id="GO:0005634">
    <property type="term" value="C:nucleus"/>
    <property type="evidence" value="ECO:0000303"/>
    <property type="project" value="ComplexPortal"/>
</dbReference>
<dbReference type="GO" id="GO:0160072">
    <property type="term" value="F:ubiquitin ligase complex scaffold activity"/>
    <property type="evidence" value="ECO:0007669"/>
    <property type="project" value="Ensembl"/>
</dbReference>
<dbReference type="GO" id="GO:0061630">
    <property type="term" value="F:ubiquitin protein ligase activity"/>
    <property type="evidence" value="ECO:0007669"/>
    <property type="project" value="Ensembl"/>
</dbReference>
<dbReference type="GO" id="GO:0031625">
    <property type="term" value="F:ubiquitin protein ligase binding"/>
    <property type="evidence" value="ECO:0007669"/>
    <property type="project" value="Ensembl"/>
</dbReference>
<dbReference type="GO" id="GO:0008283">
    <property type="term" value="P:cell population proliferation"/>
    <property type="evidence" value="ECO:0000314"/>
    <property type="project" value="MGI"/>
</dbReference>
<dbReference type="GO" id="GO:0034644">
    <property type="term" value="P:cellular response to UV"/>
    <property type="evidence" value="ECO:0000269"/>
    <property type="project" value="ComplexPortal"/>
</dbReference>
<dbReference type="GO" id="GO:0006974">
    <property type="term" value="P:DNA damage response"/>
    <property type="evidence" value="ECO:0000269"/>
    <property type="project" value="ComplexPortal"/>
</dbReference>
<dbReference type="GO" id="GO:0006281">
    <property type="term" value="P:DNA repair"/>
    <property type="evidence" value="ECO:0007669"/>
    <property type="project" value="UniProtKB-KW"/>
</dbReference>
<dbReference type="GO" id="GO:0030097">
    <property type="term" value="P:hemopoiesis"/>
    <property type="evidence" value="ECO:0000315"/>
    <property type="project" value="MGI"/>
</dbReference>
<dbReference type="GO" id="GO:0001701">
    <property type="term" value="P:in utero embryonic development"/>
    <property type="evidence" value="ECO:0000315"/>
    <property type="project" value="CACAO"/>
</dbReference>
<dbReference type="GO" id="GO:0030853">
    <property type="term" value="P:negative regulation of granulocyte differentiation"/>
    <property type="evidence" value="ECO:0000314"/>
    <property type="project" value="MGI"/>
</dbReference>
<dbReference type="GO" id="GO:0008284">
    <property type="term" value="P:positive regulation of cell population proliferation"/>
    <property type="evidence" value="ECO:0000314"/>
    <property type="project" value="MGI"/>
</dbReference>
<dbReference type="GO" id="GO:1900087">
    <property type="term" value="P:positive regulation of G1/S transition of mitotic cell cycle"/>
    <property type="evidence" value="ECO:0000315"/>
    <property type="project" value="MGI"/>
</dbReference>
<dbReference type="GO" id="GO:0045732">
    <property type="term" value="P:positive regulation of protein catabolic process"/>
    <property type="evidence" value="ECO:0000266"/>
    <property type="project" value="MGI"/>
</dbReference>
<dbReference type="GO" id="GO:0043161">
    <property type="term" value="P:proteasome-mediated ubiquitin-dependent protein catabolic process"/>
    <property type="evidence" value="ECO:0000314"/>
    <property type="project" value="MGI"/>
</dbReference>
<dbReference type="GO" id="GO:0016567">
    <property type="term" value="P:protein ubiquitination"/>
    <property type="evidence" value="ECO:0007669"/>
    <property type="project" value="UniProtKB-UniPathway"/>
</dbReference>
<dbReference type="GO" id="GO:2000001">
    <property type="term" value="P:regulation of DNA damage checkpoint"/>
    <property type="evidence" value="ECO:0000315"/>
    <property type="project" value="MGI"/>
</dbReference>
<dbReference type="GO" id="GO:2000819">
    <property type="term" value="P:regulation of nucleotide-excision repair"/>
    <property type="evidence" value="ECO:0000315"/>
    <property type="project" value="MGI"/>
</dbReference>
<dbReference type="GO" id="GO:0051246">
    <property type="term" value="P:regulation of protein metabolic process"/>
    <property type="evidence" value="ECO:0000315"/>
    <property type="project" value="MGI"/>
</dbReference>
<dbReference type="GO" id="GO:0048511">
    <property type="term" value="P:rhythmic process"/>
    <property type="evidence" value="ECO:0007669"/>
    <property type="project" value="UniProtKB-KW"/>
</dbReference>
<dbReference type="GO" id="GO:0042254">
    <property type="term" value="P:ribosome biogenesis"/>
    <property type="evidence" value="ECO:0000315"/>
    <property type="project" value="UniProtKB"/>
</dbReference>
<dbReference type="GO" id="GO:0035019">
    <property type="term" value="P:somatic stem cell population maintenance"/>
    <property type="evidence" value="ECO:0000315"/>
    <property type="project" value="MGI"/>
</dbReference>
<dbReference type="GO" id="GO:0007283">
    <property type="term" value="P:spermatogenesis"/>
    <property type="evidence" value="ECO:0007669"/>
    <property type="project" value="Ensembl"/>
</dbReference>
<dbReference type="GO" id="GO:0042110">
    <property type="term" value="P:T cell activation"/>
    <property type="evidence" value="ECO:0007669"/>
    <property type="project" value="Ensembl"/>
</dbReference>
<dbReference type="GO" id="GO:0006511">
    <property type="term" value="P:ubiquitin-dependent protein catabolic process"/>
    <property type="evidence" value="ECO:0000315"/>
    <property type="project" value="MGI"/>
</dbReference>
<dbReference type="GO" id="GO:0140627">
    <property type="term" value="P:ubiquitin-dependent protein catabolic process via the C-end degron rule pathway"/>
    <property type="evidence" value="ECO:0007669"/>
    <property type="project" value="Ensembl"/>
</dbReference>
<dbReference type="FunFam" id="1.20.1310.10:FF:000003">
    <property type="entry name" value="Cullin 4A"/>
    <property type="match status" value="1"/>
</dbReference>
<dbReference type="FunFam" id="3.30.230.130:FF:000001">
    <property type="entry name" value="Cullin 4A"/>
    <property type="match status" value="1"/>
</dbReference>
<dbReference type="FunFam" id="1.10.10.10:FF:000050">
    <property type="entry name" value="Cullin 4B"/>
    <property type="match status" value="1"/>
</dbReference>
<dbReference type="FunFam" id="1.20.1310.10:FF:000004">
    <property type="entry name" value="Cullin 4B"/>
    <property type="match status" value="1"/>
</dbReference>
<dbReference type="FunFam" id="1.20.1310.10:FF:000008">
    <property type="entry name" value="Cullin 4B"/>
    <property type="match status" value="1"/>
</dbReference>
<dbReference type="FunFam" id="1.20.1310.10:FF:000010">
    <property type="entry name" value="Cullin 4B"/>
    <property type="match status" value="1"/>
</dbReference>
<dbReference type="Gene3D" id="1.20.1310.10">
    <property type="entry name" value="Cullin Repeats"/>
    <property type="match status" value="4"/>
</dbReference>
<dbReference type="Gene3D" id="3.30.230.130">
    <property type="entry name" value="Cullin, Chain C, Domain 2"/>
    <property type="match status" value="1"/>
</dbReference>
<dbReference type="Gene3D" id="1.10.10.10">
    <property type="entry name" value="Winged helix-like DNA-binding domain superfamily/Winged helix DNA-binding domain"/>
    <property type="match status" value="1"/>
</dbReference>
<dbReference type="InterPro" id="IPR045093">
    <property type="entry name" value="Cullin"/>
</dbReference>
<dbReference type="InterPro" id="IPR016157">
    <property type="entry name" value="Cullin_CS"/>
</dbReference>
<dbReference type="InterPro" id="IPR016158">
    <property type="entry name" value="Cullin_homology"/>
</dbReference>
<dbReference type="InterPro" id="IPR036317">
    <property type="entry name" value="Cullin_homology_sf"/>
</dbReference>
<dbReference type="InterPro" id="IPR001373">
    <property type="entry name" value="Cullin_N"/>
</dbReference>
<dbReference type="InterPro" id="IPR019559">
    <property type="entry name" value="Cullin_neddylation_domain"/>
</dbReference>
<dbReference type="InterPro" id="IPR016159">
    <property type="entry name" value="Cullin_repeat-like_dom_sf"/>
</dbReference>
<dbReference type="InterPro" id="IPR036388">
    <property type="entry name" value="WH-like_DNA-bd_sf"/>
</dbReference>
<dbReference type="InterPro" id="IPR036390">
    <property type="entry name" value="WH_DNA-bd_sf"/>
</dbReference>
<dbReference type="PANTHER" id="PTHR11932">
    <property type="entry name" value="CULLIN"/>
    <property type="match status" value="1"/>
</dbReference>
<dbReference type="Pfam" id="PF00888">
    <property type="entry name" value="Cullin"/>
    <property type="match status" value="1"/>
</dbReference>
<dbReference type="Pfam" id="PF10557">
    <property type="entry name" value="Cullin_Nedd8"/>
    <property type="match status" value="1"/>
</dbReference>
<dbReference type="SMART" id="SM00182">
    <property type="entry name" value="CULLIN"/>
    <property type="match status" value="1"/>
</dbReference>
<dbReference type="SMART" id="SM00884">
    <property type="entry name" value="Cullin_Nedd8"/>
    <property type="match status" value="1"/>
</dbReference>
<dbReference type="SUPFAM" id="SSF75632">
    <property type="entry name" value="Cullin homology domain"/>
    <property type="match status" value="1"/>
</dbReference>
<dbReference type="SUPFAM" id="SSF74788">
    <property type="entry name" value="Cullin repeat-like"/>
    <property type="match status" value="1"/>
</dbReference>
<dbReference type="SUPFAM" id="SSF46785">
    <property type="entry name" value="Winged helix' DNA-binding domain"/>
    <property type="match status" value="1"/>
</dbReference>
<dbReference type="PROSITE" id="PS01256">
    <property type="entry name" value="CULLIN_1"/>
    <property type="match status" value="1"/>
</dbReference>
<dbReference type="PROSITE" id="PS50069">
    <property type="entry name" value="CULLIN_2"/>
    <property type="match status" value="1"/>
</dbReference>
<keyword id="KW-0090">Biological rhythms</keyword>
<keyword id="KW-0227">DNA damage</keyword>
<keyword id="KW-0234">DNA repair</keyword>
<keyword id="KW-0945">Host-virus interaction</keyword>
<keyword id="KW-1017">Isopeptide bond</keyword>
<keyword id="KW-0597">Phosphoprotein</keyword>
<keyword id="KW-1185">Reference proteome</keyword>
<keyword id="KW-0832">Ubl conjugation</keyword>
<keyword id="KW-0833">Ubl conjugation pathway</keyword>
<feature type="chain" id="PRO_0000236184" description="Cullin-4A">
    <location>
        <begin position="1"/>
        <end position="759"/>
    </location>
</feature>
<feature type="domain" description="Cullin neddylation" evidence="2">
    <location>
        <begin position="691"/>
        <end position="750"/>
    </location>
</feature>
<feature type="region of interest" description="Disordered" evidence="4">
    <location>
        <begin position="1"/>
        <end position="40"/>
    </location>
</feature>
<feature type="compositionally biased region" description="Low complexity" evidence="4">
    <location>
        <begin position="20"/>
        <end position="31"/>
    </location>
</feature>
<feature type="modified residue" description="Phosphoserine" evidence="10">
    <location>
        <position position="10"/>
    </location>
</feature>
<feature type="cross-link" description="Glycyl lysine isopeptide (Lys-Gly) (interchain with G-Cter in SUMO2)" evidence="1">
    <location>
        <position position="8"/>
    </location>
</feature>
<feature type="cross-link" description="Glycyl lysine isopeptide (Lys-Gly) (interchain with G-Cter in ubiquitin)" evidence="1">
    <location>
        <position position="33"/>
    </location>
</feature>
<feature type="cross-link" description="Glycyl lysine isopeptide (Lys-Gly) (interchain with G-Cter in NEDD8)" evidence="1">
    <location>
        <position position="705"/>
    </location>
</feature>
<feature type="sequence conflict" description="In Ref. 1; BAE40173." evidence="8" ref="1">
    <original>H</original>
    <variation>R</variation>
    <location>
        <position position="756"/>
    </location>
</feature>